<feature type="chain" id="PRO_1000121142" description="DNA replication and repair protein RecF">
    <location>
        <begin position="1"/>
        <end position="374"/>
    </location>
</feature>
<feature type="binding site" evidence="1">
    <location>
        <begin position="34"/>
        <end position="41"/>
    </location>
    <ligand>
        <name>ATP</name>
        <dbReference type="ChEBI" id="CHEBI:30616"/>
    </ligand>
</feature>
<protein>
    <recommendedName>
        <fullName evidence="1">DNA replication and repair protein RecF</fullName>
    </recommendedName>
</protein>
<dbReference type="EMBL" id="CP001074">
    <property type="protein sequence ID" value="ACE89174.1"/>
    <property type="molecule type" value="Genomic_DNA"/>
</dbReference>
<dbReference type="SMR" id="B3PXG8"/>
<dbReference type="KEGG" id="rec:RHECIAT_CH0000178"/>
<dbReference type="eggNOG" id="COG1195">
    <property type="taxonomic scope" value="Bacteria"/>
</dbReference>
<dbReference type="HOGENOM" id="CLU_040267_2_0_5"/>
<dbReference type="Proteomes" id="UP000008817">
    <property type="component" value="Chromosome"/>
</dbReference>
<dbReference type="GO" id="GO:0005737">
    <property type="term" value="C:cytoplasm"/>
    <property type="evidence" value="ECO:0007669"/>
    <property type="project" value="UniProtKB-SubCell"/>
</dbReference>
<dbReference type="GO" id="GO:0005524">
    <property type="term" value="F:ATP binding"/>
    <property type="evidence" value="ECO:0007669"/>
    <property type="project" value="UniProtKB-UniRule"/>
</dbReference>
<dbReference type="GO" id="GO:0016887">
    <property type="term" value="F:ATP hydrolysis activity"/>
    <property type="evidence" value="ECO:0007669"/>
    <property type="project" value="InterPro"/>
</dbReference>
<dbReference type="GO" id="GO:0003697">
    <property type="term" value="F:single-stranded DNA binding"/>
    <property type="evidence" value="ECO:0007669"/>
    <property type="project" value="UniProtKB-UniRule"/>
</dbReference>
<dbReference type="GO" id="GO:0006260">
    <property type="term" value="P:DNA replication"/>
    <property type="evidence" value="ECO:0007669"/>
    <property type="project" value="UniProtKB-UniRule"/>
</dbReference>
<dbReference type="GO" id="GO:0000731">
    <property type="term" value="P:DNA synthesis involved in DNA repair"/>
    <property type="evidence" value="ECO:0007669"/>
    <property type="project" value="TreeGrafter"/>
</dbReference>
<dbReference type="GO" id="GO:0006302">
    <property type="term" value="P:double-strand break repair"/>
    <property type="evidence" value="ECO:0007669"/>
    <property type="project" value="TreeGrafter"/>
</dbReference>
<dbReference type="GO" id="GO:0009432">
    <property type="term" value="P:SOS response"/>
    <property type="evidence" value="ECO:0007669"/>
    <property type="project" value="UniProtKB-UniRule"/>
</dbReference>
<dbReference type="CDD" id="cd03242">
    <property type="entry name" value="ABC_RecF"/>
    <property type="match status" value="1"/>
</dbReference>
<dbReference type="Gene3D" id="3.40.50.300">
    <property type="entry name" value="P-loop containing nucleotide triphosphate hydrolases"/>
    <property type="match status" value="1"/>
</dbReference>
<dbReference type="Gene3D" id="1.20.1050.90">
    <property type="entry name" value="RecF/RecN/SMC, N-terminal domain"/>
    <property type="match status" value="1"/>
</dbReference>
<dbReference type="HAMAP" id="MF_00365">
    <property type="entry name" value="RecF"/>
    <property type="match status" value="1"/>
</dbReference>
<dbReference type="InterPro" id="IPR003593">
    <property type="entry name" value="AAA+_ATPase"/>
</dbReference>
<dbReference type="InterPro" id="IPR001238">
    <property type="entry name" value="DNA-binding_RecF"/>
</dbReference>
<dbReference type="InterPro" id="IPR018078">
    <property type="entry name" value="DNA-binding_RecF_CS"/>
</dbReference>
<dbReference type="InterPro" id="IPR027417">
    <property type="entry name" value="P-loop_NTPase"/>
</dbReference>
<dbReference type="InterPro" id="IPR003395">
    <property type="entry name" value="RecF/RecN/SMC_N"/>
</dbReference>
<dbReference type="InterPro" id="IPR042174">
    <property type="entry name" value="RecF_2"/>
</dbReference>
<dbReference type="NCBIfam" id="TIGR00611">
    <property type="entry name" value="recf"/>
    <property type="match status" value="1"/>
</dbReference>
<dbReference type="PANTHER" id="PTHR32182">
    <property type="entry name" value="DNA REPLICATION AND REPAIR PROTEIN RECF"/>
    <property type="match status" value="1"/>
</dbReference>
<dbReference type="PANTHER" id="PTHR32182:SF0">
    <property type="entry name" value="DNA REPLICATION AND REPAIR PROTEIN RECF"/>
    <property type="match status" value="1"/>
</dbReference>
<dbReference type="Pfam" id="PF02463">
    <property type="entry name" value="SMC_N"/>
    <property type="match status" value="1"/>
</dbReference>
<dbReference type="SMART" id="SM00382">
    <property type="entry name" value="AAA"/>
    <property type="match status" value="1"/>
</dbReference>
<dbReference type="SUPFAM" id="SSF52540">
    <property type="entry name" value="P-loop containing nucleoside triphosphate hydrolases"/>
    <property type="match status" value="1"/>
</dbReference>
<dbReference type="PROSITE" id="PS00617">
    <property type="entry name" value="RECF_1"/>
    <property type="match status" value="1"/>
</dbReference>
<dbReference type="PROSITE" id="PS00618">
    <property type="entry name" value="RECF_2"/>
    <property type="match status" value="1"/>
</dbReference>
<comment type="function">
    <text evidence="1">The RecF protein is involved in DNA metabolism; it is required for DNA replication and normal SOS inducibility. RecF binds preferentially to single-stranded, linear DNA. It also seems to bind ATP.</text>
</comment>
<comment type="subcellular location">
    <subcellularLocation>
        <location evidence="1">Cytoplasm</location>
    </subcellularLocation>
</comment>
<comment type="similarity">
    <text evidence="1">Belongs to the RecF family.</text>
</comment>
<accession>B3PXG8</accession>
<gene>
    <name evidence="1" type="primary">recF</name>
    <name type="ordered locus">RHECIAT_CH0000178</name>
</gene>
<keyword id="KW-0067">ATP-binding</keyword>
<keyword id="KW-0963">Cytoplasm</keyword>
<keyword id="KW-0227">DNA damage</keyword>
<keyword id="KW-0234">DNA repair</keyword>
<keyword id="KW-0235">DNA replication</keyword>
<keyword id="KW-0238">DNA-binding</keyword>
<keyword id="KW-0547">Nucleotide-binding</keyword>
<keyword id="KW-0742">SOS response</keyword>
<organism>
    <name type="scientific">Rhizobium etli (strain CIAT 652)</name>
    <dbReference type="NCBI Taxonomy" id="491916"/>
    <lineage>
        <taxon>Bacteria</taxon>
        <taxon>Pseudomonadati</taxon>
        <taxon>Pseudomonadota</taxon>
        <taxon>Alphaproteobacteria</taxon>
        <taxon>Hyphomicrobiales</taxon>
        <taxon>Rhizobiaceae</taxon>
        <taxon>Rhizobium/Agrobacterium group</taxon>
        <taxon>Rhizobium</taxon>
    </lineage>
</organism>
<name>RECF_RHIE6</name>
<evidence type="ECO:0000255" key="1">
    <source>
        <dbReference type="HAMAP-Rule" id="MF_00365"/>
    </source>
</evidence>
<sequence length="374" mass="40460">MPHKVSLSRLKLTDFRNYAAVSLALDGRHAVLTGNNGAGKTNLMEAVSLLSPGRGLRRAAYGDITRVGAAGGFSIFAALDGMEGEVEIGTGIEAGEETTTRKLRINGTPAKTADELTDHLRLLWLTPAMDGLFTGASSDRRRFLDRLVLSLDPAHGRRASDFERAMRSRNKLLDEGRFDPSWLAGIEEQMASLGIAMALARQEMLGLLARLIEERPESSPFPSASLQLSGFMDGQFSRPSVDLEDEYAAMLAESRYRDASAGRTLDGPHRADLIVHHREKAMEAERCSTGEQKALLVGLVLAHARLVGNLTGHAPILLLDEIAAHLDEGRRAALFDLIDGLGGQAFMTGTDQTMFSALADRAQFFTVADGKVFG</sequence>
<proteinExistence type="inferred from homology"/>
<reference key="1">
    <citation type="journal article" date="2010" name="Appl. Environ. Microbiol.">
        <title>Conserved symbiotic plasmid DNA sequences in the multireplicon pangenomic structure of Rhizobium etli.</title>
        <authorList>
            <person name="Gonzalez V."/>
            <person name="Acosta J.L."/>
            <person name="Santamaria R.I."/>
            <person name="Bustos P."/>
            <person name="Fernandez J.L."/>
            <person name="Hernandez Gonzalez I.L."/>
            <person name="Diaz R."/>
            <person name="Flores M."/>
            <person name="Palacios R."/>
            <person name="Mora J."/>
            <person name="Davila G."/>
        </authorList>
    </citation>
    <scope>NUCLEOTIDE SEQUENCE [LARGE SCALE GENOMIC DNA]</scope>
    <source>
        <strain>CIAT 652</strain>
    </source>
</reference>